<feature type="chain" id="PRO_0000072781" description="Putative double-stranded DNA mimic protein plu2488">
    <location>
        <begin position="1"/>
        <end position="109"/>
    </location>
</feature>
<sequence length="109" mass="12580">MDLDLNNRMTEDETLEKAYDIFLELASFNLDPADILLFSLQFEIRGGAELLPPSDGWLKHVDFNPNPDFFAEVIIGLAESEDAEINDVFARILICREKSHPIYHILWKE</sequence>
<reference key="1">
    <citation type="journal article" date="2003" name="Nat. Biotechnol.">
        <title>The genome sequence of the entomopathogenic bacterium Photorhabdus luminescens.</title>
        <authorList>
            <person name="Duchaud E."/>
            <person name="Rusniok C."/>
            <person name="Frangeul L."/>
            <person name="Buchrieser C."/>
            <person name="Givaudan A."/>
            <person name="Taourit S."/>
            <person name="Bocs S."/>
            <person name="Boursaux-Eude C."/>
            <person name="Chandler M."/>
            <person name="Charles J.-F."/>
            <person name="Dassa E."/>
            <person name="Derose R."/>
            <person name="Derzelle S."/>
            <person name="Freyssinet G."/>
            <person name="Gaudriault S."/>
            <person name="Medigue C."/>
            <person name="Lanois A."/>
            <person name="Powell K."/>
            <person name="Siguier P."/>
            <person name="Vincent R."/>
            <person name="Wingate V."/>
            <person name="Zouine M."/>
            <person name="Glaser P."/>
            <person name="Boemare N."/>
            <person name="Danchin A."/>
            <person name="Kunst F."/>
        </authorList>
    </citation>
    <scope>NUCLEOTIDE SEQUENCE [LARGE SCALE GENOMIC DNA]</scope>
    <source>
        <strain>DSM 15139 / CIP 105565 / TT01</strain>
    </source>
</reference>
<dbReference type="EMBL" id="BX571867">
    <property type="protein sequence ID" value="CAE14862.1"/>
    <property type="molecule type" value="Genomic_DNA"/>
</dbReference>
<dbReference type="RefSeq" id="WP_011146711.1">
    <property type="nucleotide sequence ID" value="NC_005126.1"/>
</dbReference>
<dbReference type="SMR" id="Q7N466"/>
<dbReference type="STRING" id="243265.plu2488"/>
<dbReference type="GeneID" id="48848753"/>
<dbReference type="KEGG" id="plu:plu2488"/>
<dbReference type="eggNOG" id="COG3099">
    <property type="taxonomic scope" value="Bacteria"/>
</dbReference>
<dbReference type="HOGENOM" id="CLU_143392_0_0_6"/>
<dbReference type="OrthoDB" id="5677388at2"/>
<dbReference type="Proteomes" id="UP000002514">
    <property type="component" value="Chromosome"/>
</dbReference>
<dbReference type="Gene3D" id="3.10.450.140">
    <property type="entry name" value="dsDNA mimic, putative"/>
    <property type="match status" value="1"/>
</dbReference>
<dbReference type="HAMAP" id="MF_00680">
    <property type="entry name" value="Put_dsDNA_mimic"/>
    <property type="match status" value="1"/>
</dbReference>
<dbReference type="InterPro" id="IPR007376">
    <property type="entry name" value="dsDNA_mimic_put"/>
</dbReference>
<dbReference type="InterPro" id="IPR036763">
    <property type="entry name" value="Put_dsDNA_mimic_sf"/>
</dbReference>
<dbReference type="NCBIfam" id="NF003469">
    <property type="entry name" value="PRK05094.1"/>
    <property type="match status" value="1"/>
</dbReference>
<dbReference type="Pfam" id="PF04269">
    <property type="entry name" value="DUF440"/>
    <property type="match status" value="1"/>
</dbReference>
<dbReference type="PIRSF" id="PIRSF004916">
    <property type="entry name" value="UCP004916"/>
    <property type="match status" value="1"/>
</dbReference>
<dbReference type="SUPFAM" id="SSF102816">
    <property type="entry name" value="Putative dsDNA mimic"/>
    <property type="match status" value="1"/>
</dbReference>
<organism>
    <name type="scientific">Photorhabdus laumondii subsp. laumondii (strain DSM 15139 / CIP 105565 / TT01)</name>
    <name type="common">Photorhabdus luminescens subsp. laumondii</name>
    <dbReference type="NCBI Taxonomy" id="243265"/>
    <lineage>
        <taxon>Bacteria</taxon>
        <taxon>Pseudomonadati</taxon>
        <taxon>Pseudomonadota</taxon>
        <taxon>Gammaproteobacteria</taxon>
        <taxon>Enterobacterales</taxon>
        <taxon>Morganellaceae</taxon>
        <taxon>Photorhabdus</taxon>
    </lineage>
</organism>
<protein>
    <recommendedName>
        <fullName evidence="1">Putative double-stranded DNA mimic protein plu2488</fullName>
    </recommendedName>
</protein>
<gene>
    <name type="ordered locus">plu2488</name>
</gene>
<accession>Q7N466</accession>
<proteinExistence type="inferred from homology"/>
<keyword id="KW-1185">Reference proteome</keyword>
<name>Y2488_PHOLL</name>
<comment type="function">
    <text evidence="1">May act as a double-stranded DNA (dsDNA) mimic. Probably regulates the activity of a dsDNA-binding protein.</text>
</comment>
<comment type="similarity">
    <text evidence="1">Belongs to the putative dsDNA mimic protein family.</text>
</comment>
<evidence type="ECO:0000255" key="1">
    <source>
        <dbReference type="HAMAP-Rule" id="MF_00680"/>
    </source>
</evidence>